<protein>
    <recommendedName>
        <fullName evidence="1">Large ribosomal subunit protein uL2</fullName>
    </recommendedName>
    <alternativeName>
        <fullName evidence="3">50S ribosomal protein L2</fullName>
    </alternativeName>
</protein>
<keyword id="KW-0687">Ribonucleoprotein</keyword>
<keyword id="KW-0689">Ribosomal protein</keyword>
<keyword id="KW-0694">RNA-binding</keyword>
<keyword id="KW-0699">rRNA-binding</keyword>
<sequence length="276" mass="30253">MGIKKYNPTTNGRRNMTTNDFAEITTDRPEKSLLAPLSKKAGRNNQGKITVRHQGGGHKRQYRIIDFKRNKDGIPGRVATIEYDPNRSANIALINYVDGEKRYILAPKNLEVGMEIMSGAEADIKIGNALPLINIPVGTVVHNIELKPGRGGQLVRSAGTSAQVLGKEGKYVLVRLTSGEVRLVLSACRATVGQVGNESHELIKIGKAGRSRWLGKRPTVRGSVMNPVDHPHGGGEGRSPIGRKSPMSPWGKPTLGFKTRKKNKASDKFIVRRRKK</sequence>
<name>RL2_BACHK</name>
<evidence type="ECO:0000255" key="1">
    <source>
        <dbReference type="HAMAP-Rule" id="MF_01320"/>
    </source>
</evidence>
<evidence type="ECO:0000256" key="2">
    <source>
        <dbReference type="SAM" id="MobiDB-lite"/>
    </source>
</evidence>
<evidence type="ECO:0000305" key="3"/>
<dbReference type="EMBL" id="AE017355">
    <property type="protein sequence ID" value="AAT61468.1"/>
    <property type="molecule type" value="Genomic_DNA"/>
</dbReference>
<dbReference type="RefSeq" id="WP_000511580.1">
    <property type="nucleotide sequence ID" value="NC_005957.1"/>
</dbReference>
<dbReference type="RefSeq" id="YP_034465.1">
    <property type="nucleotide sequence ID" value="NC_005957.1"/>
</dbReference>
<dbReference type="SMR" id="Q6HPQ5"/>
<dbReference type="GeneID" id="93010940"/>
<dbReference type="KEGG" id="btk:BT9727_0109"/>
<dbReference type="PATRIC" id="fig|281309.8.peg.110"/>
<dbReference type="HOGENOM" id="CLU_036235_2_1_9"/>
<dbReference type="Proteomes" id="UP000001301">
    <property type="component" value="Chromosome"/>
</dbReference>
<dbReference type="GO" id="GO:0015934">
    <property type="term" value="C:large ribosomal subunit"/>
    <property type="evidence" value="ECO:0007669"/>
    <property type="project" value="InterPro"/>
</dbReference>
<dbReference type="GO" id="GO:0019843">
    <property type="term" value="F:rRNA binding"/>
    <property type="evidence" value="ECO:0007669"/>
    <property type="project" value="UniProtKB-UniRule"/>
</dbReference>
<dbReference type="GO" id="GO:0003735">
    <property type="term" value="F:structural constituent of ribosome"/>
    <property type="evidence" value="ECO:0007669"/>
    <property type="project" value="InterPro"/>
</dbReference>
<dbReference type="GO" id="GO:0016740">
    <property type="term" value="F:transferase activity"/>
    <property type="evidence" value="ECO:0007669"/>
    <property type="project" value="InterPro"/>
</dbReference>
<dbReference type="GO" id="GO:0002181">
    <property type="term" value="P:cytoplasmic translation"/>
    <property type="evidence" value="ECO:0007669"/>
    <property type="project" value="TreeGrafter"/>
</dbReference>
<dbReference type="FunFam" id="2.30.30.30:FF:000001">
    <property type="entry name" value="50S ribosomal protein L2"/>
    <property type="match status" value="1"/>
</dbReference>
<dbReference type="FunFam" id="2.40.50.140:FF:000003">
    <property type="entry name" value="50S ribosomal protein L2"/>
    <property type="match status" value="1"/>
</dbReference>
<dbReference type="FunFam" id="4.10.950.10:FF:000001">
    <property type="entry name" value="50S ribosomal protein L2"/>
    <property type="match status" value="1"/>
</dbReference>
<dbReference type="Gene3D" id="2.30.30.30">
    <property type="match status" value="1"/>
</dbReference>
<dbReference type="Gene3D" id="2.40.50.140">
    <property type="entry name" value="Nucleic acid-binding proteins"/>
    <property type="match status" value="1"/>
</dbReference>
<dbReference type="Gene3D" id="4.10.950.10">
    <property type="entry name" value="Ribosomal protein L2, domain 3"/>
    <property type="match status" value="1"/>
</dbReference>
<dbReference type="HAMAP" id="MF_01320_B">
    <property type="entry name" value="Ribosomal_uL2_B"/>
    <property type="match status" value="1"/>
</dbReference>
<dbReference type="InterPro" id="IPR012340">
    <property type="entry name" value="NA-bd_OB-fold"/>
</dbReference>
<dbReference type="InterPro" id="IPR014722">
    <property type="entry name" value="Rib_uL2_dom2"/>
</dbReference>
<dbReference type="InterPro" id="IPR002171">
    <property type="entry name" value="Ribosomal_uL2"/>
</dbReference>
<dbReference type="InterPro" id="IPR005880">
    <property type="entry name" value="Ribosomal_uL2_bac/org-type"/>
</dbReference>
<dbReference type="InterPro" id="IPR022669">
    <property type="entry name" value="Ribosomal_uL2_C"/>
</dbReference>
<dbReference type="InterPro" id="IPR022671">
    <property type="entry name" value="Ribosomal_uL2_CS"/>
</dbReference>
<dbReference type="InterPro" id="IPR014726">
    <property type="entry name" value="Ribosomal_uL2_dom3"/>
</dbReference>
<dbReference type="InterPro" id="IPR022666">
    <property type="entry name" value="Ribosomal_uL2_RNA-bd_dom"/>
</dbReference>
<dbReference type="InterPro" id="IPR008991">
    <property type="entry name" value="Translation_prot_SH3-like_sf"/>
</dbReference>
<dbReference type="NCBIfam" id="TIGR01171">
    <property type="entry name" value="rplB_bact"/>
    <property type="match status" value="1"/>
</dbReference>
<dbReference type="PANTHER" id="PTHR13691:SF5">
    <property type="entry name" value="LARGE RIBOSOMAL SUBUNIT PROTEIN UL2M"/>
    <property type="match status" value="1"/>
</dbReference>
<dbReference type="PANTHER" id="PTHR13691">
    <property type="entry name" value="RIBOSOMAL PROTEIN L2"/>
    <property type="match status" value="1"/>
</dbReference>
<dbReference type="Pfam" id="PF00181">
    <property type="entry name" value="Ribosomal_L2"/>
    <property type="match status" value="1"/>
</dbReference>
<dbReference type="Pfam" id="PF03947">
    <property type="entry name" value="Ribosomal_L2_C"/>
    <property type="match status" value="1"/>
</dbReference>
<dbReference type="PIRSF" id="PIRSF002158">
    <property type="entry name" value="Ribosomal_L2"/>
    <property type="match status" value="1"/>
</dbReference>
<dbReference type="SMART" id="SM01383">
    <property type="entry name" value="Ribosomal_L2"/>
    <property type="match status" value="1"/>
</dbReference>
<dbReference type="SMART" id="SM01382">
    <property type="entry name" value="Ribosomal_L2_C"/>
    <property type="match status" value="1"/>
</dbReference>
<dbReference type="SUPFAM" id="SSF50249">
    <property type="entry name" value="Nucleic acid-binding proteins"/>
    <property type="match status" value="1"/>
</dbReference>
<dbReference type="SUPFAM" id="SSF50104">
    <property type="entry name" value="Translation proteins SH3-like domain"/>
    <property type="match status" value="1"/>
</dbReference>
<dbReference type="PROSITE" id="PS00467">
    <property type="entry name" value="RIBOSOMAL_L2"/>
    <property type="match status" value="1"/>
</dbReference>
<comment type="function">
    <text evidence="1">One of the primary rRNA binding proteins. Required for association of the 30S and 50S subunits to form the 70S ribosome, for tRNA binding and peptide bond formation. It has been suggested to have peptidyltransferase activity; this is somewhat controversial. Makes several contacts with the 16S rRNA in the 70S ribosome.</text>
</comment>
<comment type="subunit">
    <text evidence="1">Part of the 50S ribosomal subunit. Forms a bridge to the 30S subunit in the 70S ribosome.</text>
</comment>
<comment type="similarity">
    <text evidence="1">Belongs to the universal ribosomal protein uL2 family.</text>
</comment>
<feature type="chain" id="PRO_0000237153" description="Large ribosomal subunit protein uL2">
    <location>
        <begin position="1"/>
        <end position="276"/>
    </location>
</feature>
<feature type="region of interest" description="Disordered" evidence="2">
    <location>
        <begin position="1"/>
        <end position="20"/>
    </location>
</feature>
<feature type="region of interest" description="Disordered" evidence="2">
    <location>
        <begin position="219"/>
        <end position="276"/>
    </location>
</feature>
<feature type="compositionally biased region" description="Polar residues" evidence="2">
    <location>
        <begin position="7"/>
        <end position="20"/>
    </location>
</feature>
<proteinExistence type="inferred from homology"/>
<accession>Q6HPQ5</accession>
<organism>
    <name type="scientific">Bacillus thuringiensis subsp. konkukian (strain 97-27)</name>
    <dbReference type="NCBI Taxonomy" id="281309"/>
    <lineage>
        <taxon>Bacteria</taxon>
        <taxon>Bacillati</taxon>
        <taxon>Bacillota</taxon>
        <taxon>Bacilli</taxon>
        <taxon>Bacillales</taxon>
        <taxon>Bacillaceae</taxon>
        <taxon>Bacillus</taxon>
        <taxon>Bacillus cereus group</taxon>
    </lineage>
</organism>
<reference key="1">
    <citation type="journal article" date="2006" name="J. Bacteriol.">
        <title>Pathogenomic sequence analysis of Bacillus cereus and Bacillus thuringiensis isolates closely related to Bacillus anthracis.</title>
        <authorList>
            <person name="Han C.S."/>
            <person name="Xie G."/>
            <person name="Challacombe J.F."/>
            <person name="Altherr M.R."/>
            <person name="Bhotika S.S."/>
            <person name="Bruce D."/>
            <person name="Campbell C.S."/>
            <person name="Campbell M.L."/>
            <person name="Chen J."/>
            <person name="Chertkov O."/>
            <person name="Cleland C."/>
            <person name="Dimitrijevic M."/>
            <person name="Doggett N.A."/>
            <person name="Fawcett J.J."/>
            <person name="Glavina T."/>
            <person name="Goodwin L.A."/>
            <person name="Hill K.K."/>
            <person name="Hitchcock P."/>
            <person name="Jackson P.J."/>
            <person name="Keim P."/>
            <person name="Kewalramani A.R."/>
            <person name="Longmire J."/>
            <person name="Lucas S."/>
            <person name="Malfatti S."/>
            <person name="McMurry K."/>
            <person name="Meincke L.J."/>
            <person name="Misra M."/>
            <person name="Moseman B.L."/>
            <person name="Mundt M."/>
            <person name="Munk A.C."/>
            <person name="Okinaka R.T."/>
            <person name="Parson-Quintana B."/>
            <person name="Reilly L.P."/>
            <person name="Richardson P."/>
            <person name="Robinson D.L."/>
            <person name="Rubin E."/>
            <person name="Saunders E."/>
            <person name="Tapia R."/>
            <person name="Tesmer J.G."/>
            <person name="Thayer N."/>
            <person name="Thompson L.S."/>
            <person name="Tice H."/>
            <person name="Ticknor L.O."/>
            <person name="Wills P.L."/>
            <person name="Brettin T.S."/>
            <person name="Gilna P."/>
        </authorList>
    </citation>
    <scope>NUCLEOTIDE SEQUENCE [LARGE SCALE GENOMIC DNA]</scope>
    <source>
        <strain>97-27</strain>
    </source>
</reference>
<gene>
    <name evidence="1" type="primary">rplB</name>
    <name type="ordered locus">BT9727_0109</name>
</gene>